<sequence>MKNKLPPFIEIYRALIATPSISATEEALDQSNADLITLLADWFKDLGFNVEVQPVPGTRNKFNMLASCGQGAGGLLLAGHTDTVPFDDGRWTRDPFTLTEHDGKLYGLGTADMKGFFAFILDALRDVDVTKLKKPLYILATADEETSMAGARYFAETTALRPDCAIIGEPTSLQPVRAHKGHISNAIRIQGQSGHSSDPARGVNAIELMHDAIGHILQLRDNLKERYHYDAFTVPYPTLNLGHIHGGDASNRICACCELHMDIRPLPGMTLNELNGLLNDALAPVSERWPGRLTVDELHPPIPGYECPPNHQLVEVVEKLLGAKTEVVNYCTEAPFIQTLCPTLVLGPGSINQAHQPDEYLETRFIKPTRELITQVIHHFCWH</sequence>
<organism>
    <name type="scientific">Escherichia coli O17:K52:H18 (strain UMN026 / ExPEC)</name>
    <dbReference type="NCBI Taxonomy" id="585056"/>
    <lineage>
        <taxon>Bacteria</taxon>
        <taxon>Pseudomonadati</taxon>
        <taxon>Pseudomonadota</taxon>
        <taxon>Gammaproteobacteria</taxon>
        <taxon>Enterobacterales</taxon>
        <taxon>Enterobacteriaceae</taxon>
        <taxon>Escherichia</taxon>
    </lineage>
</organism>
<name>ARGE_ECOLU</name>
<keyword id="KW-0028">Amino-acid biosynthesis</keyword>
<keyword id="KW-0055">Arginine biosynthesis</keyword>
<keyword id="KW-0170">Cobalt</keyword>
<keyword id="KW-0963">Cytoplasm</keyword>
<keyword id="KW-0378">Hydrolase</keyword>
<keyword id="KW-0479">Metal-binding</keyword>
<keyword id="KW-0862">Zinc</keyword>
<accession>B7NFQ7</accession>
<evidence type="ECO:0000255" key="1">
    <source>
        <dbReference type="HAMAP-Rule" id="MF_01108"/>
    </source>
</evidence>
<feature type="chain" id="PRO_1000137066" description="Acetylornithine deacetylase">
    <location>
        <begin position="1"/>
        <end position="383"/>
    </location>
</feature>
<feature type="active site" evidence="1">
    <location>
        <position position="82"/>
    </location>
</feature>
<feature type="active site" evidence="1">
    <location>
        <position position="144"/>
    </location>
</feature>
<feature type="binding site" evidence="1">
    <location>
        <position position="80"/>
    </location>
    <ligand>
        <name>Zn(2+)</name>
        <dbReference type="ChEBI" id="CHEBI:29105"/>
        <label>1</label>
    </ligand>
</feature>
<feature type="binding site" evidence="1">
    <location>
        <position position="112"/>
    </location>
    <ligand>
        <name>Zn(2+)</name>
        <dbReference type="ChEBI" id="CHEBI:29105"/>
        <label>1</label>
    </ligand>
</feature>
<feature type="binding site" evidence="1">
    <location>
        <position position="112"/>
    </location>
    <ligand>
        <name>Zn(2+)</name>
        <dbReference type="ChEBI" id="CHEBI:29105"/>
        <label>2</label>
    </ligand>
</feature>
<feature type="binding site" evidence="1">
    <location>
        <position position="145"/>
    </location>
    <ligand>
        <name>Zn(2+)</name>
        <dbReference type="ChEBI" id="CHEBI:29105"/>
        <label>2</label>
    </ligand>
</feature>
<feature type="binding site" evidence="1">
    <location>
        <position position="169"/>
    </location>
    <ligand>
        <name>Zn(2+)</name>
        <dbReference type="ChEBI" id="CHEBI:29105"/>
        <label>1</label>
    </ligand>
</feature>
<feature type="binding site" evidence="1">
    <location>
        <position position="355"/>
    </location>
    <ligand>
        <name>Zn(2+)</name>
        <dbReference type="ChEBI" id="CHEBI:29105"/>
        <label>2</label>
    </ligand>
</feature>
<gene>
    <name evidence="1" type="primary">argE</name>
    <name type="ordered locus">ECUMN_4488</name>
</gene>
<comment type="function">
    <text evidence="1">Catalyzes the hydrolysis of the amide bond of N(2)-acetylated L-amino acids. Cleaves the acetyl group from N-acetyl-L-ornithine to form L-ornithine, an intermediate in L-arginine biosynthesis pathway, and a branchpoint in the synthesis of polyamines.</text>
</comment>
<comment type="catalytic activity">
    <reaction evidence="1">
        <text>N(2)-acetyl-L-ornithine + H2O = L-ornithine + acetate</text>
        <dbReference type="Rhea" id="RHEA:15941"/>
        <dbReference type="ChEBI" id="CHEBI:15377"/>
        <dbReference type="ChEBI" id="CHEBI:30089"/>
        <dbReference type="ChEBI" id="CHEBI:46911"/>
        <dbReference type="ChEBI" id="CHEBI:57805"/>
        <dbReference type="EC" id="3.5.1.16"/>
    </reaction>
</comment>
<comment type="cofactor">
    <cofactor evidence="1">
        <name>Zn(2+)</name>
        <dbReference type="ChEBI" id="CHEBI:29105"/>
    </cofactor>
    <cofactor evidence="1">
        <name>Co(2+)</name>
        <dbReference type="ChEBI" id="CHEBI:48828"/>
    </cofactor>
    <text evidence="1">Binds 2 Zn(2+) or Co(2+) ions per subunit.</text>
</comment>
<comment type="cofactor">
    <cofactor evidence="1">
        <name>glutathione</name>
        <dbReference type="ChEBI" id="CHEBI:57925"/>
    </cofactor>
</comment>
<comment type="pathway">
    <text evidence="1">Amino-acid biosynthesis; L-arginine biosynthesis; L-ornithine from N(2)-acetyl-L-ornithine (linear): step 1/1.</text>
</comment>
<comment type="subunit">
    <text evidence="1">Homodimer.</text>
</comment>
<comment type="subcellular location">
    <subcellularLocation>
        <location evidence="1">Cytoplasm</location>
    </subcellularLocation>
</comment>
<comment type="similarity">
    <text evidence="1">Belongs to the peptidase M20A family. ArgE subfamily.</text>
</comment>
<reference key="1">
    <citation type="journal article" date="2009" name="PLoS Genet.">
        <title>Organised genome dynamics in the Escherichia coli species results in highly diverse adaptive paths.</title>
        <authorList>
            <person name="Touchon M."/>
            <person name="Hoede C."/>
            <person name="Tenaillon O."/>
            <person name="Barbe V."/>
            <person name="Baeriswyl S."/>
            <person name="Bidet P."/>
            <person name="Bingen E."/>
            <person name="Bonacorsi S."/>
            <person name="Bouchier C."/>
            <person name="Bouvet O."/>
            <person name="Calteau A."/>
            <person name="Chiapello H."/>
            <person name="Clermont O."/>
            <person name="Cruveiller S."/>
            <person name="Danchin A."/>
            <person name="Diard M."/>
            <person name="Dossat C."/>
            <person name="Karoui M.E."/>
            <person name="Frapy E."/>
            <person name="Garry L."/>
            <person name="Ghigo J.M."/>
            <person name="Gilles A.M."/>
            <person name="Johnson J."/>
            <person name="Le Bouguenec C."/>
            <person name="Lescat M."/>
            <person name="Mangenot S."/>
            <person name="Martinez-Jehanne V."/>
            <person name="Matic I."/>
            <person name="Nassif X."/>
            <person name="Oztas S."/>
            <person name="Petit M.A."/>
            <person name="Pichon C."/>
            <person name="Rouy Z."/>
            <person name="Ruf C.S."/>
            <person name="Schneider D."/>
            <person name="Tourret J."/>
            <person name="Vacherie B."/>
            <person name="Vallenet D."/>
            <person name="Medigue C."/>
            <person name="Rocha E.P.C."/>
            <person name="Denamur E."/>
        </authorList>
    </citation>
    <scope>NUCLEOTIDE SEQUENCE [LARGE SCALE GENOMIC DNA]</scope>
    <source>
        <strain>UMN026 / ExPEC</strain>
    </source>
</reference>
<protein>
    <recommendedName>
        <fullName evidence="1">Acetylornithine deacetylase</fullName>
        <shortName evidence="1">AO</shortName>
        <shortName evidence="1">Acetylornithinase</shortName>
        <ecNumber evidence="1">3.5.1.16</ecNumber>
    </recommendedName>
    <alternativeName>
        <fullName evidence="1">N-acetylornithinase</fullName>
        <shortName evidence="1">NAO</shortName>
    </alternativeName>
</protein>
<proteinExistence type="inferred from homology"/>
<dbReference type="EC" id="3.5.1.16" evidence="1"/>
<dbReference type="EMBL" id="CU928163">
    <property type="protein sequence ID" value="CAR15614.1"/>
    <property type="molecule type" value="Genomic_DNA"/>
</dbReference>
<dbReference type="RefSeq" id="WP_001309894.1">
    <property type="nucleotide sequence ID" value="NC_011751.1"/>
</dbReference>
<dbReference type="RefSeq" id="YP_002415103.1">
    <property type="nucleotide sequence ID" value="NC_011751.1"/>
</dbReference>
<dbReference type="SMR" id="B7NFQ7"/>
<dbReference type="STRING" id="585056.ECUMN_4488"/>
<dbReference type="MEROPS" id="M20.974"/>
<dbReference type="KEGG" id="eum:ECUMN_4488"/>
<dbReference type="PATRIC" id="fig|585056.7.peg.4658"/>
<dbReference type="HOGENOM" id="CLU_021802_2_4_6"/>
<dbReference type="UniPathway" id="UPA00068">
    <property type="reaction ID" value="UER00110"/>
</dbReference>
<dbReference type="Proteomes" id="UP000007097">
    <property type="component" value="Chromosome"/>
</dbReference>
<dbReference type="GO" id="GO:0005737">
    <property type="term" value="C:cytoplasm"/>
    <property type="evidence" value="ECO:0007669"/>
    <property type="project" value="UniProtKB-SubCell"/>
</dbReference>
<dbReference type="GO" id="GO:0008777">
    <property type="term" value="F:acetylornithine deacetylase activity"/>
    <property type="evidence" value="ECO:0007669"/>
    <property type="project" value="UniProtKB-UniRule"/>
</dbReference>
<dbReference type="GO" id="GO:0008270">
    <property type="term" value="F:zinc ion binding"/>
    <property type="evidence" value="ECO:0007669"/>
    <property type="project" value="UniProtKB-UniRule"/>
</dbReference>
<dbReference type="GO" id="GO:0006526">
    <property type="term" value="P:L-arginine biosynthetic process"/>
    <property type="evidence" value="ECO:0007669"/>
    <property type="project" value="UniProtKB-UniRule"/>
</dbReference>
<dbReference type="CDD" id="cd03894">
    <property type="entry name" value="M20_ArgE"/>
    <property type="match status" value="1"/>
</dbReference>
<dbReference type="FunFam" id="3.30.70.360:FF:000003">
    <property type="entry name" value="Acetylornithine deacetylase"/>
    <property type="match status" value="1"/>
</dbReference>
<dbReference type="Gene3D" id="3.30.70.360">
    <property type="match status" value="1"/>
</dbReference>
<dbReference type="Gene3D" id="3.40.630.10">
    <property type="entry name" value="Zn peptidases"/>
    <property type="match status" value="1"/>
</dbReference>
<dbReference type="HAMAP" id="MF_01108">
    <property type="entry name" value="ArgE"/>
    <property type="match status" value="1"/>
</dbReference>
<dbReference type="InterPro" id="IPR010169">
    <property type="entry name" value="AcOrn-deacetyl"/>
</dbReference>
<dbReference type="InterPro" id="IPR001261">
    <property type="entry name" value="ArgE/DapE_CS"/>
</dbReference>
<dbReference type="InterPro" id="IPR036264">
    <property type="entry name" value="Bact_exopeptidase_dim_dom"/>
</dbReference>
<dbReference type="InterPro" id="IPR002933">
    <property type="entry name" value="Peptidase_M20"/>
</dbReference>
<dbReference type="InterPro" id="IPR011650">
    <property type="entry name" value="Peptidase_M20_dimer"/>
</dbReference>
<dbReference type="InterPro" id="IPR050072">
    <property type="entry name" value="Peptidase_M20A"/>
</dbReference>
<dbReference type="NCBIfam" id="TIGR01892">
    <property type="entry name" value="AcOrn-deacetyl"/>
    <property type="match status" value="1"/>
</dbReference>
<dbReference type="NCBIfam" id="NF003474">
    <property type="entry name" value="PRK05111.1"/>
    <property type="match status" value="1"/>
</dbReference>
<dbReference type="PANTHER" id="PTHR43808">
    <property type="entry name" value="ACETYLORNITHINE DEACETYLASE"/>
    <property type="match status" value="1"/>
</dbReference>
<dbReference type="PANTHER" id="PTHR43808:SF1">
    <property type="entry name" value="ACETYLORNITHINE DEACETYLASE"/>
    <property type="match status" value="1"/>
</dbReference>
<dbReference type="Pfam" id="PF07687">
    <property type="entry name" value="M20_dimer"/>
    <property type="match status" value="1"/>
</dbReference>
<dbReference type="Pfam" id="PF01546">
    <property type="entry name" value="Peptidase_M20"/>
    <property type="match status" value="1"/>
</dbReference>
<dbReference type="SUPFAM" id="SSF55031">
    <property type="entry name" value="Bacterial exopeptidase dimerisation domain"/>
    <property type="match status" value="1"/>
</dbReference>
<dbReference type="SUPFAM" id="SSF53187">
    <property type="entry name" value="Zn-dependent exopeptidases"/>
    <property type="match status" value="1"/>
</dbReference>
<dbReference type="PROSITE" id="PS00758">
    <property type="entry name" value="ARGE_DAPE_CPG2_1"/>
    <property type="match status" value="1"/>
</dbReference>
<dbReference type="PROSITE" id="PS00759">
    <property type="entry name" value="ARGE_DAPE_CPG2_2"/>
    <property type="match status" value="1"/>
</dbReference>